<accession>B4E5Z6</accession>
<dbReference type="EMBL" id="AM747720">
    <property type="protein sequence ID" value="CAR50583.1"/>
    <property type="molecule type" value="Genomic_DNA"/>
</dbReference>
<dbReference type="RefSeq" id="WP_006482891.1">
    <property type="nucleotide sequence ID" value="NC_011000.1"/>
</dbReference>
<dbReference type="PDB" id="4JPD">
    <property type="method" value="X-ray"/>
    <property type="resolution" value="1.90 A"/>
    <property type="chains" value="A=1-108"/>
</dbReference>
<dbReference type="PDBsum" id="4JPD"/>
<dbReference type="SMR" id="B4E5Z6"/>
<dbReference type="GeneID" id="56556823"/>
<dbReference type="KEGG" id="bcj:BCAL0273"/>
<dbReference type="eggNOG" id="COG1965">
    <property type="taxonomic scope" value="Bacteria"/>
</dbReference>
<dbReference type="HOGENOM" id="CLU_080880_3_0_4"/>
<dbReference type="BioCyc" id="BCEN216591:G1G1V-316-MONOMER"/>
<dbReference type="EvolutionaryTrace" id="B4E5Z6"/>
<dbReference type="Proteomes" id="UP000001035">
    <property type="component" value="Chromosome 1"/>
</dbReference>
<dbReference type="GO" id="GO:0005829">
    <property type="term" value="C:cytosol"/>
    <property type="evidence" value="ECO:0007669"/>
    <property type="project" value="TreeGrafter"/>
</dbReference>
<dbReference type="GO" id="GO:0008199">
    <property type="term" value="F:ferric iron binding"/>
    <property type="evidence" value="ECO:0007669"/>
    <property type="project" value="InterPro"/>
</dbReference>
<dbReference type="GO" id="GO:0008198">
    <property type="term" value="F:ferrous iron binding"/>
    <property type="evidence" value="ECO:0007669"/>
    <property type="project" value="TreeGrafter"/>
</dbReference>
<dbReference type="GO" id="GO:0016226">
    <property type="term" value="P:iron-sulfur cluster assembly"/>
    <property type="evidence" value="ECO:0007669"/>
    <property type="project" value="UniProtKB-UniRule"/>
</dbReference>
<dbReference type="CDD" id="cd00503">
    <property type="entry name" value="Frataxin"/>
    <property type="match status" value="1"/>
</dbReference>
<dbReference type="Gene3D" id="3.30.920.10">
    <property type="entry name" value="Frataxin/CyaY"/>
    <property type="match status" value="1"/>
</dbReference>
<dbReference type="HAMAP" id="MF_00142">
    <property type="entry name" value="CyaY"/>
    <property type="match status" value="1"/>
</dbReference>
<dbReference type="InterPro" id="IPR047584">
    <property type="entry name" value="CyaY"/>
</dbReference>
<dbReference type="InterPro" id="IPR002908">
    <property type="entry name" value="Frataxin/CyaY"/>
</dbReference>
<dbReference type="InterPro" id="IPR036524">
    <property type="entry name" value="Frataxin/CyaY_sf"/>
</dbReference>
<dbReference type="InterPro" id="IPR020895">
    <property type="entry name" value="Frataxin_CS"/>
</dbReference>
<dbReference type="NCBIfam" id="TIGR03421">
    <property type="entry name" value="FeS_CyaY"/>
    <property type="match status" value="1"/>
</dbReference>
<dbReference type="PANTHER" id="PTHR16821">
    <property type="entry name" value="FRATAXIN"/>
    <property type="match status" value="1"/>
</dbReference>
<dbReference type="PANTHER" id="PTHR16821:SF2">
    <property type="entry name" value="FRATAXIN, MITOCHONDRIAL"/>
    <property type="match status" value="1"/>
</dbReference>
<dbReference type="Pfam" id="PF01491">
    <property type="entry name" value="Frataxin_Cyay"/>
    <property type="match status" value="1"/>
</dbReference>
<dbReference type="SMART" id="SM01219">
    <property type="entry name" value="Frataxin_Cyay"/>
    <property type="match status" value="1"/>
</dbReference>
<dbReference type="SUPFAM" id="SSF55387">
    <property type="entry name" value="Frataxin/Nqo15-like"/>
    <property type="match status" value="1"/>
</dbReference>
<dbReference type="PROSITE" id="PS01344">
    <property type="entry name" value="FRATAXIN_1"/>
    <property type="match status" value="1"/>
</dbReference>
<dbReference type="PROSITE" id="PS50810">
    <property type="entry name" value="FRATAXIN_2"/>
    <property type="match status" value="1"/>
</dbReference>
<name>CYAY_BURCJ</name>
<reference key="1">
    <citation type="journal article" date="2009" name="J. Bacteriol.">
        <title>The genome of Burkholderia cenocepacia J2315, an epidemic pathogen of cystic fibrosis patients.</title>
        <authorList>
            <person name="Holden M.T."/>
            <person name="Seth-Smith H.M."/>
            <person name="Crossman L.C."/>
            <person name="Sebaihia M."/>
            <person name="Bentley S.D."/>
            <person name="Cerdeno-Tarraga A.M."/>
            <person name="Thomson N.R."/>
            <person name="Bason N."/>
            <person name="Quail M.A."/>
            <person name="Sharp S."/>
            <person name="Cherevach I."/>
            <person name="Churcher C."/>
            <person name="Goodhead I."/>
            <person name="Hauser H."/>
            <person name="Holroyd N."/>
            <person name="Mungall K."/>
            <person name="Scott P."/>
            <person name="Walker D."/>
            <person name="White B."/>
            <person name="Rose H."/>
            <person name="Iversen P."/>
            <person name="Mil-Homens D."/>
            <person name="Rocha E.P."/>
            <person name="Fialho A.M."/>
            <person name="Baldwin A."/>
            <person name="Dowson C."/>
            <person name="Barrell B.G."/>
            <person name="Govan J.R."/>
            <person name="Vandamme P."/>
            <person name="Hart C.A."/>
            <person name="Mahenthiralingam E."/>
            <person name="Parkhill J."/>
        </authorList>
    </citation>
    <scope>NUCLEOTIDE SEQUENCE [LARGE SCALE GENOMIC DNA]</scope>
    <source>
        <strain>ATCC BAA-245 / DSM 16553 / LMG 16656 / NCTC 13227 / J2315 / CF5610</strain>
    </source>
</reference>
<sequence length="108" mass="11927">MSDTEYLARAEAVLAAVERTVDVANDGDHDIDLERNGSVLTLTFENGSKIIVNLQPPMKEVWIAAKAGGFHYRFIDGEWRDTRTGTEFFSALTDYATQQAGLPITFSA</sequence>
<feature type="chain" id="PRO_1000096237" description="Iron-sulfur cluster assembly protein CyaY">
    <location>
        <begin position="1"/>
        <end position="108"/>
    </location>
</feature>
<feature type="helix" evidence="2">
    <location>
        <begin position="4"/>
        <end position="26"/>
    </location>
</feature>
<feature type="strand" evidence="2">
    <location>
        <begin position="32"/>
        <end position="36"/>
    </location>
</feature>
<feature type="strand" evidence="2">
    <location>
        <begin position="39"/>
        <end position="43"/>
    </location>
</feature>
<feature type="strand" evidence="2">
    <location>
        <begin position="49"/>
        <end position="55"/>
    </location>
</feature>
<feature type="helix" evidence="2">
    <location>
        <begin position="56"/>
        <end position="58"/>
    </location>
</feature>
<feature type="strand" evidence="2">
    <location>
        <begin position="60"/>
        <end position="65"/>
    </location>
</feature>
<feature type="strand" evidence="2">
    <location>
        <begin position="68"/>
        <end position="75"/>
    </location>
</feature>
<feature type="strand" evidence="2">
    <location>
        <begin position="78"/>
        <end position="81"/>
    </location>
</feature>
<feature type="turn" evidence="2">
    <location>
        <begin position="82"/>
        <end position="84"/>
    </location>
</feature>
<feature type="helix" evidence="2">
    <location>
        <begin position="88"/>
        <end position="100"/>
    </location>
</feature>
<comment type="function">
    <text evidence="1">Involved in iron-sulfur (Fe-S) cluster assembly. May act as a regulator of Fe-S biogenesis.</text>
</comment>
<comment type="similarity">
    <text evidence="1">Belongs to the frataxin family.</text>
</comment>
<protein>
    <recommendedName>
        <fullName evidence="1">Iron-sulfur cluster assembly protein CyaY</fullName>
    </recommendedName>
</protein>
<gene>
    <name evidence="1" type="primary">cyaY</name>
    <name type="ordered locus">BceJ2315_02750</name>
    <name type="ORF">BCAL0273</name>
</gene>
<proteinExistence type="evidence at protein level"/>
<evidence type="ECO:0000255" key="1">
    <source>
        <dbReference type="HAMAP-Rule" id="MF_00142"/>
    </source>
</evidence>
<evidence type="ECO:0007829" key="2">
    <source>
        <dbReference type="PDB" id="4JPD"/>
    </source>
</evidence>
<organism>
    <name type="scientific">Burkholderia cenocepacia (strain ATCC BAA-245 / DSM 16553 / LMG 16656 / NCTC 13227 / J2315 / CF5610)</name>
    <name type="common">Burkholderia cepacia (strain J2315)</name>
    <dbReference type="NCBI Taxonomy" id="216591"/>
    <lineage>
        <taxon>Bacteria</taxon>
        <taxon>Pseudomonadati</taxon>
        <taxon>Pseudomonadota</taxon>
        <taxon>Betaproteobacteria</taxon>
        <taxon>Burkholderiales</taxon>
        <taxon>Burkholderiaceae</taxon>
        <taxon>Burkholderia</taxon>
        <taxon>Burkholderia cepacia complex</taxon>
    </lineage>
</organism>
<keyword id="KW-0002">3D-structure</keyword>
<keyword id="KW-0408">Iron</keyword>
<keyword id="KW-0479">Metal-binding</keyword>